<protein>
    <recommendedName>
        <fullName evidence="1">Envelope glycoprotein N</fullName>
    </recommendedName>
</protein>
<dbReference type="EMBL" id="U38547">
    <property type="protein sequence ID" value="AAB02854.1"/>
    <property type="molecule type" value="Genomic_DNA"/>
</dbReference>
<dbReference type="EMBL" id="BK001744">
    <property type="protein sequence ID" value="DAA02145.1"/>
    <property type="molecule type" value="Genomic_DNA"/>
</dbReference>
<dbReference type="RefSeq" id="YP_068325.1">
    <property type="nucleotide sequence ID" value="NC_006151.1"/>
</dbReference>
<dbReference type="SMR" id="Q87088"/>
<dbReference type="TCDB" id="8.B.25.1.1">
    <property type="family name" value="the viral glycoprotein n (gn, ul49,5) tap inhibitor (gn-i) family"/>
</dbReference>
<dbReference type="GeneID" id="2952538"/>
<dbReference type="KEGG" id="vg:2952538"/>
<dbReference type="Proteomes" id="UP000165522">
    <property type="component" value="Genome"/>
</dbReference>
<dbReference type="GO" id="GO:0044177">
    <property type="term" value="C:host cell Golgi apparatus"/>
    <property type="evidence" value="ECO:0007669"/>
    <property type="project" value="UniProtKB-SubCell"/>
</dbReference>
<dbReference type="GO" id="GO:0033644">
    <property type="term" value="C:host cell membrane"/>
    <property type="evidence" value="ECO:0007669"/>
    <property type="project" value="UniProtKB-SubCell"/>
</dbReference>
<dbReference type="GO" id="GO:0016020">
    <property type="term" value="C:membrane"/>
    <property type="evidence" value="ECO:0007669"/>
    <property type="project" value="UniProtKB-KW"/>
</dbReference>
<dbReference type="GO" id="GO:0019031">
    <property type="term" value="C:viral envelope"/>
    <property type="evidence" value="ECO:0007669"/>
    <property type="project" value="UniProtKB-KW"/>
</dbReference>
<dbReference type="GO" id="GO:0055036">
    <property type="term" value="C:virion membrane"/>
    <property type="evidence" value="ECO:0007669"/>
    <property type="project" value="UniProtKB-SubCell"/>
</dbReference>
<dbReference type="HAMAP" id="MF_04037">
    <property type="entry name" value="HSV_GN"/>
    <property type="match status" value="1"/>
</dbReference>
<dbReference type="InterPro" id="IPR008647">
    <property type="entry name" value="GN_domain"/>
</dbReference>
<dbReference type="InterPro" id="IPR034707">
    <property type="entry name" value="HSV_GN"/>
</dbReference>
<dbReference type="Pfam" id="PF05702">
    <property type="entry name" value="Herpes_UL49_5"/>
    <property type="match status" value="1"/>
</dbReference>
<organism>
    <name type="scientific">Suid herpesvirus 1</name>
    <name type="common">SuHV-1</name>
    <name type="synonym">Pseudorabies virus</name>
    <dbReference type="NCBI Taxonomy" id="10345"/>
    <lineage>
        <taxon>Viruses</taxon>
        <taxon>Duplodnaviria</taxon>
        <taxon>Heunggongvirae</taxon>
        <taxon>Peploviricota</taxon>
        <taxon>Herviviricetes</taxon>
        <taxon>Herpesvirales</taxon>
        <taxon>Orthoherpesviridae</taxon>
        <taxon>Alphaherpesvirinae</taxon>
        <taxon>Varicellovirus</taxon>
        <taxon>Varicellovirus suidalpha1</taxon>
    </lineage>
</organism>
<sequence length="98" mass="10155">MVSSAGLSLTLVAALCALVAPALSSIVSTEGPLPLLREESRINFWNAACAARGVPVDQPTAAAVTFYICLLAVLVVALGYATRTCTRMLHASPAGRRV</sequence>
<name>GN_SUHV</name>
<feature type="signal peptide" evidence="1">
    <location>
        <begin position="1"/>
        <end position="24"/>
    </location>
</feature>
<feature type="chain" id="PRO_0000339175" description="Envelope glycoprotein N" evidence="1">
    <location>
        <begin position="25"/>
        <end position="98"/>
    </location>
</feature>
<feature type="topological domain" description="Virion surface" evidence="1">
    <location>
        <begin position="25"/>
        <end position="60"/>
    </location>
</feature>
<feature type="transmembrane region" description="Helical" evidence="1">
    <location>
        <begin position="61"/>
        <end position="81"/>
    </location>
</feature>
<feature type="topological domain" description="Intravirion" evidence="1">
    <location>
        <begin position="82"/>
        <end position="98"/>
    </location>
</feature>
<feature type="disulfide bond" description="Interchain (with gM)" evidence="1">
    <location>
        <position position="49"/>
    </location>
</feature>
<gene>
    <name evidence="1" type="primary">gN</name>
    <name type="ORF">UL49.5</name>
</gene>
<keyword id="KW-1015">Disulfide bond</keyword>
<keyword id="KW-1040">Host Golgi apparatus</keyword>
<keyword id="KW-1043">Host membrane</keyword>
<keyword id="KW-0472">Membrane</keyword>
<keyword id="KW-1185">Reference proteome</keyword>
<keyword id="KW-0732">Signal</keyword>
<keyword id="KW-0812">Transmembrane</keyword>
<keyword id="KW-1133">Transmembrane helix</keyword>
<keyword id="KW-0261">Viral envelope protein</keyword>
<keyword id="KW-0946">Virion</keyword>
<evidence type="ECO:0000255" key="1">
    <source>
        <dbReference type="HAMAP-Rule" id="MF_04037"/>
    </source>
</evidence>
<evidence type="ECO:0000269" key="2">
    <source>
    </source>
</evidence>
<evidence type="ECO:0000269" key="3">
    <source>
    </source>
</evidence>
<proteinExistence type="evidence at protein level"/>
<comment type="function">
    <text evidence="1">Envelope glycoprotein necessary for proper maturation of gM and modulation of its membrane fusion activity. Also plays a critical role in virion morphogenesis.</text>
</comment>
<comment type="subunit">
    <text evidence="1 3">Interacts (via N-terminus) with gM (via N-terminus). The gM-gN heterodimer forms the gCII complex.</text>
</comment>
<comment type="subcellular location">
    <subcellularLocation>
        <location evidence="1">Virion membrane</location>
        <topology evidence="1">Single-pass type I membrane protein</topology>
    </subcellularLocation>
    <subcellularLocation>
        <location evidence="1">Host membrane</location>
        <topology evidence="1">Single-pass type I membrane protein</topology>
    </subcellularLocation>
    <subcellularLocation>
        <location evidence="1">Host Golgi apparatus</location>
        <location evidence="1">Host trans-Golgi network</location>
    </subcellularLocation>
    <text evidence="1">When coexpressed with gM, localizes in the host trans-Golgi network.</text>
</comment>
<comment type="PTM">
    <text evidence="2 3">O-glycosylated.</text>
</comment>
<comment type="similarity">
    <text evidence="1">Belongs to the herpesviridae glycoprotein N family.</text>
</comment>
<accession>Q87088</accession>
<reference key="1">
    <citation type="journal article" date="1996" name="J. Virol.">
        <title>The UL49.5 gene of pseudorabies virus codes for an O-glycosylated structural protein of the viral envelope.</title>
        <authorList>
            <person name="Joens A."/>
            <person name="Granzow H."/>
            <person name="Kuchling R."/>
            <person name="Mettenleiter T.C."/>
        </authorList>
    </citation>
    <scope>NUCLEOTIDE SEQUENCE [GENOMIC DNA]</scope>
    <scope>SUBCELLULAR LOCATION</scope>
    <scope>GLYCOSYLATION</scope>
    <source>
        <strain>Kaplan</strain>
    </source>
</reference>
<reference key="2">
    <citation type="journal article" date="2004" name="J. Virol.">
        <title>Complete, annotated sequence of the pseudorabies virus genome.</title>
        <authorList>
            <person name="Klupp B.G."/>
            <person name="Hengartner C.J."/>
            <person name="Mettenleiter T.C."/>
            <person name="Enquist L.W."/>
        </authorList>
    </citation>
    <scope>NUCLEOTIDE SEQUENCE [LARGE SCALE GENOMIC DNA]</scope>
</reference>
<reference key="3">
    <citation type="journal article" date="1998" name="J. Virol.">
        <title>Glycoproteins M and N of pseudorabies virus form a disulfide-linked complex.</title>
        <authorList>
            <person name="Joens A."/>
            <person name="Dijkstra J.M."/>
            <person name="Mettenleiter T.C."/>
        </authorList>
    </citation>
    <scope>SUBUNIT</scope>
    <scope>GLYCOSYLATION</scope>
    <scope>DISULFIDE BOND</scope>
</reference>